<evidence type="ECO:0000255" key="1">
    <source>
        <dbReference type="HAMAP-Rule" id="MF_04004"/>
    </source>
</evidence>
<organismHost>
    <name type="scientific">Homo sapiens</name>
    <name type="common">Human</name>
    <dbReference type="NCBI Taxonomy" id="9606"/>
</organismHost>
<protein>
    <recommendedName>
        <fullName evidence="1">Protein E7</fullName>
    </recommendedName>
</protein>
<gene>
    <name evidence="1" type="primary">E7</name>
</gene>
<organism>
    <name type="scientific">Human papillomavirus 27</name>
    <dbReference type="NCBI Taxonomy" id="333752"/>
    <lineage>
        <taxon>Viruses</taxon>
        <taxon>Monodnaviria</taxon>
        <taxon>Shotokuvirae</taxon>
        <taxon>Cossaviricota</taxon>
        <taxon>Papovaviricetes</taxon>
        <taxon>Zurhausenvirales</taxon>
        <taxon>Papillomaviridae</taxon>
        <taxon>Firstpapillomavirinae</taxon>
        <taxon>Alphapapillomavirus</taxon>
        <taxon>Alphapapillomavirus 4</taxon>
    </lineage>
</organism>
<reference key="1">
    <citation type="journal article" date="1994" name="Curr. Top. Microbiol. Immunol.">
        <title>Primer-directed sequencing of human papillomavirus types.</title>
        <authorList>
            <person name="Delius H."/>
            <person name="Hofmann B."/>
        </authorList>
    </citation>
    <scope>NUCLEOTIDE SEQUENCE [GENOMIC DNA]</scope>
</reference>
<reference key="2">
    <citation type="journal article" date="2002" name="Rev. Med. Virol.">
        <title>Interactions of SV40 large T antigen and other viral proteins with retinoblastoma tumour suppressor.</title>
        <authorList>
            <person name="Lee C."/>
            <person name="Cho Y."/>
        </authorList>
    </citation>
    <scope>REVIEW</scope>
</reference>
<name>VE7_HPV27</name>
<feature type="chain" id="PRO_0000133425" description="Protein E7">
    <location>
        <begin position="1"/>
        <end position="92"/>
    </location>
</feature>
<feature type="zinc finger region" evidence="1">
    <location>
        <begin position="55"/>
        <end position="91"/>
    </location>
</feature>
<feature type="region of interest" description="E7 terminal domain" evidence="1">
    <location>
        <begin position="1"/>
        <end position="43"/>
    </location>
</feature>
<feature type="short sequence motif" description="LXCXE motif; interaction with host RB1 and TMEM173/STING" evidence="1">
    <location>
        <begin position="24"/>
        <end position="28"/>
    </location>
</feature>
<feature type="short sequence motif" description="Nuclear export signal" evidence="1">
    <location>
        <begin position="73"/>
        <end position="81"/>
    </location>
</feature>
<sequence length="92" mass="10279">MHGTRPSLADITLILEEIPEIIDLHCDEQFDSSEEENNHQLTEPAVQAYGVVTTCCKCGRAVRLVVECGPEDIRDLEQLFLKTLNLVCPHCA</sequence>
<comment type="function">
    <text evidence="1">Plays a role in viral genome replication by driving entry of quiescent cells into the cell cycle. Stimulation of progression from G1 to S phase allows the virus to efficiently use the cellular DNA replicating machinery to achieve viral genome replication. E7 protein has both transforming and trans-activating activities. Induces the disassembly of the E2F1 transcription factor from RB1, with subsequent transcriptional activation of E2F1-regulated S-phase genes. Interferes with host histone deacetylation mediated by HDAC1 and HDAC2, leading to transcription activation. Also plays a role in the inhibition of both antiviral and antiproliferative functions of host interferon alpha. Interaction with host TMEM173/STING impairs the ability of TMEM173/STING to sense cytosolic DNA and promote the production of type I interferon (IFN-alpha and IFN-beta).</text>
</comment>
<comment type="subunit">
    <text evidence="1">Homodimer. Homooligomer. Interacts with host RB1; this interaction induces dissociation of RB1-E2F1 complex thereby disrupting RB1 activity. Interacts with host EP300; this interaction represses EP300 transcriptional activity. Interacts with protein E2; this interaction inhibits E7 oncogenic activity. Interacts with host TMEM173/STING; this interaction impairs the ability of TMEM173/STING to sense cytosolic DNA and promote the production of type I interferon (IFN-alpha and IFN-beta).</text>
</comment>
<comment type="subcellular location">
    <subcellularLocation>
        <location evidence="1">Host cytoplasm</location>
    </subcellularLocation>
    <subcellularLocation>
        <location evidence="1">Host nucleus</location>
    </subcellularLocation>
    <text evidence="1">Predominantly found in the host nucleus.</text>
</comment>
<comment type="domain">
    <text evidence="1">The E7 terminal domain is an intrinsically disordered domain, whose flexibility and conformational transitions confer target adaptability to the oncoprotein. It allows adaptation to a variety of protein targets and exposes the PEST degradation sequence that regulates its turnover in the cell.</text>
</comment>
<comment type="PTM">
    <text evidence="1">Highly phosphorylated.</text>
</comment>
<comment type="similarity">
    <text evidence="1">Belongs to the papillomaviridae E7 protein family.</text>
</comment>
<accession>P36825</accession>
<dbReference type="EMBL" id="X74473">
    <property type="protein sequence ID" value="CAA52537.1"/>
    <property type="molecule type" value="Genomic_DNA"/>
</dbReference>
<dbReference type="PIR" id="S36498">
    <property type="entry name" value="S36498"/>
</dbReference>
<dbReference type="SMR" id="P36825"/>
<dbReference type="Proteomes" id="UP000009114">
    <property type="component" value="Genome"/>
</dbReference>
<dbReference type="GO" id="GO:0030430">
    <property type="term" value="C:host cell cytoplasm"/>
    <property type="evidence" value="ECO:0007669"/>
    <property type="project" value="UniProtKB-SubCell"/>
</dbReference>
<dbReference type="GO" id="GO:0042025">
    <property type="term" value="C:host cell nucleus"/>
    <property type="evidence" value="ECO:0007669"/>
    <property type="project" value="UniProtKB-SubCell"/>
</dbReference>
<dbReference type="GO" id="GO:0003677">
    <property type="term" value="F:DNA binding"/>
    <property type="evidence" value="ECO:0007669"/>
    <property type="project" value="UniProtKB-UniRule"/>
</dbReference>
<dbReference type="GO" id="GO:0003700">
    <property type="term" value="F:DNA-binding transcription factor activity"/>
    <property type="evidence" value="ECO:0007669"/>
    <property type="project" value="UniProtKB-UniRule"/>
</dbReference>
<dbReference type="GO" id="GO:0019904">
    <property type="term" value="F:protein domain specific binding"/>
    <property type="evidence" value="ECO:0007669"/>
    <property type="project" value="UniProtKB-UniRule"/>
</dbReference>
<dbReference type="GO" id="GO:0008270">
    <property type="term" value="F:zinc ion binding"/>
    <property type="evidence" value="ECO:0007669"/>
    <property type="project" value="UniProtKB-KW"/>
</dbReference>
<dbReference type="GO" id="GO:0006351">
    <property type="term" value="P:DNA-templated transcription"/>
    <property type="evidence" value="ECO:0007669"/>
    <property type="project" value="UniProtKB-UniRule"/>
</dbReference>
<dbReference type="GO" id="GO:0039645">
    <property type="term" value="P:symbiont-mediated perturbation of host cell cycle G1/S transition checkpoint"/>
    <property type="evidence" value="ECO:0007669"/>
    <property type="project" value="UniProtKB-UniRule"/>
</dbReference>
<dbReference type="GO" id="GO:0052170">
    <property type="term" value="P:symbiont-mediated suppression of host innate immune response"/>
    <property type="evidence" value="ECO:0007669"/>
    <property type="project" value="UniProtKB-KW"/>
</dbReference>
<dbReference type="GO" id="GO:0039502">
    <property type="term" value="P:symbiont-mediated suppression of host type I interferon-mediated signaling pathway"/>
    <property type="evidence" value="ECO:0007669"/>
    <property type="project" value="UniProtKB-UniRule"/>
</dbReference>
<dbReference type="Gene3D" id="3.30.160.330">
    <property type="match status" value="1"/>
</dbReference>
<dbReference type="HAMAP" id="MF_04004">
    <property type="entry name" value="PPV_E7"/>
    <property type="match status" value="1"/>
</dbReference>
<dbReference type="InterPro" id="IPR000148">
    <property type="entry name" value="Papilloma_E7"/>
</dbReference>
<dbReference type="Pfam" id="PF00527">
    <property type="entry name" value="E7"/>
    <property type="match status" value="1"/>
</dbReference>
<dbReference type="PIRSF" id="PIRSF003407">
    <property type="entry name" value="Papvi_E7"/>
    <property type="match status" value="1"/>
</dbReference>
<dbReference type="SUPFAM" id="SSF161234">
    <property type="entry name" value="E7 C-terminal domain-like"/>
    <property type="match status" value="1"/>
</dbReference>
<keyword id="KW-0010">Activator</keyword>
<keyword id="KW-0238">DNA-binding</keyword>
<keyword id="KW-0244">Early protein</keyword>
<keyword id="KW-1078">G1/S host cell cycle checkpoint dysregulation by virus</keyword>
<keyword id="KW-1035">Host cytoplasm</keyword>
<keyword id="KW-1048">Host nucleus</keyword>
<keyword id="KW-0945">Host-virus interaction</keyword>
<keyword id="KW-1090">Inhibition of host innate immune response by virus</keyword>
<keyword id="KW-1114">Inhibition of host interferon signaling pathway by virus</keyword>
<keyword id="KW-0922">Interferon antiviral system evasion</keyword>
<keyword id="KW-0479">Metal-binding</keyword>
<keyword id="KW-1121">Modulation of host cell cycle by virus</keyword>
<keyword id="KW-0553">Oncogene</keyword>
<keyword id="KW-1185">Reference proteome</keyword>
<keyword id="KW-0804">Transcription</keyword>
<keyword id="KW-0805">Transcription regulation</keyword>
<keyword id="KW-0899">Viral immunoevasion</keyword>
<keyword id="KW-0862">Zinc</keyword>
<keyword id="KW-0863">Zinc-finger</keyword>
<proteinExistence type="inferred from homology"/>